<accession>W6QIT2</accession>
<comment type="function">
    <text evidence="1 4">Catalyzes the conversion of inosine 5'-phosphate (IMP) to xanthosine 5'-phosphate (XMP), the first committed and rate-limiting step in the de novo synthesis of guanine nucleotides, and therefore plays an important role in the regulation of cell growth (By similarity). Part of the gene cluster that mediates the biosynthesis of mycophenolic acid (MPA), the first isolated antibiotic natural product in the world (PubMed:26751579). Does not play a role in the biosynthesis of MPA, but is involved in self resistance to MPA, since MPA acts as an inhibitor of IMP dehydrogenases (PubMed:26751579).</text>
</comment>
<comment type="catalytic activity">
    <reaction evidence="1">
        <text>IMP + NAD(+) + H2O = XMP + NADH + H(+)</text>
        <dbReference type="Rhea" id="RHEA:11708"/>
        <dbReference type="ChEBI" id="CHEBI:15377"/>
        <dbReference type="ChEBI" id="CHEBI:15378"/>
        <dbReference type="ChEBI" id="CHEBI:57464"/>
        <dbReference type="ChEBI" id="CHEBI:57540"/>
        <dbReference type="ChEBI" id="CHEBI:57945"/>
        <dbReference type="ChEBI" id="CHEBI:58053"/>
        <dbReference type="EC" id="1.1.1.205"/>
    </reaction>
</comment>
<comment type="cofactor">
    <cofactor evidence="1">
        <name>K(+)</name>
        <dbReference type="ChEBI" id="CHEBI:29103"/>
    </cofactor>
</comment>
<comment type="activity regulation">
    <text evidence="1">Mycophenolic acid (MPA) is a non-competitive inhibitor that prevents formation of the closed enzyme conformation by binding to the same site as the amobile flap. In contrast, mizoribine monophosphate (MZP) is a competitive inhibitor that induces the closed conformation. MPA is a potent inhibitor of mammalian IMPDHs but a poor inhibitor of the bacterial enzymes. MZP is a more potent inhibitor of bacterial IMPDH.</text>
</comment>
<comment type="pathway">
    <text evidence="4">Secondary metabolite biosynthesis; terpenoid biosynthesis.</text>
</comment>
<comment type="subunit">
    <text evidence="1">Homotetramer.</text>
</comment>
<comment type="subcellular location">
    <subcellularLocation>
        <location evidence="1">Cytoplasm</location>
    </subcellularLocation>
</comment>
<comment type="disruption phenotype">
    <text evidence="4">Increases the sensitivity of P.roqueforti towards MPA and decreases MPA production by the fungus.</text>
</comment>
<comment type="similarity">
    <text evidence="1">Belongs to the IMPDH/GMPR family.</text>
</comment>
<gene>
    <name evidence="5" type="primary">mpaF</name>
    <name type="synonym">IMH3</name>
    <name evidence="6" type="ORF">PROQFM164_S05g000556</name>
</gene>
<evidence type="ECO:0000255" key="1">
    <source>
        <dbReference type="HAMAP-Rule" id="MF_03156"/>
    </source>
</evidence>
<evidence type="ECO:0000255" key="2">
    <source>
        <dbReference type="PROSITE-ProRule" id="PRU00703"/>
    </source>
</evidence>
<evidence type="ECO:0000256" key="3">
    <source>
        <dbReference type="SAM" id="MobiDB-lite"/>
    </source>
</evidence>
<evidence type="ECO:0000269" key="4">
    <source>
    </source>
</evidence>
<evidence type="ECO:0000303" key="5">
    <source>
    </source>
</evidence>
<evidence type="ECO:0000312" key="6">
    <source>
        <dbReference type="EMBL" id="CDM36723.1"/>
    </source>
</evidence>
<keyword id="KW-0129">CBS domain</keyword>
<keyword id="KW-0963">Cytoplasm</keyword>
<keyword id="KW-0332">GMP biosynthesis</keyword>
<keyword id="KW-0479">Metal-binding</keyword>
<keyword id="KW-0520">NAD</keyword>
<keyword id="KW-0560">Oxidoreductase</keyword>
<keyword id="KW-0630">Potassium</keyword>
<keyword id="KW-0658">Purine biosynthesis</keyword>
<keyword id="KW-1185">Reference proteome</keyword>
<feature type="chain" id="PRO_0000449217" description="Inosine-5'-monophosphate dehydrogenase">
    <location>
        <begin position="1"/>
        <end position="526"/>
    </location>
</feature>
<feature type="domain" description="CBS 1" evidence="2">
    <location>
        <begin position="120"/>
        <end position="179"/>
    </location>
</feature>
<feature type="domain" description="CBS 2" evidence="2">
    <location>
        <begin position="183"/>
        <end position="239"/>
    </location>
</feature>
<feature type="region of interest" description="Disordered" evidence="3">
    <location>
        <begin position="506"/>
        <end position="526"/>
    </location>
</feature>
<feature type="compositionally biased region" description="Basic and acidic residues" evidence="3">
    <location>
        <begin position="517"/>
        <end position="526"/>
    </location>
</feature>
<feature type="active site" description="Thioimidate intermediate" evidence="1">
    <location>
        <position position="333"/>
    </location>
</feature>
<feature type="active site" description="Proton acceptor" evidence="1">
    <location>
        <position position="439"/>
    </location>
</feature>
<feature type="binding site" evidence="1">
    <location>
        <begin position="276"/>
        <end position="278"/>
    </location>
    <ligand>
        <name>NAD(+)</name>
        <dbReference type="ChEBI" id="CHEBI:57540"/>
    </ligand>
</feature>
<feature type="binding site" evidence="1">
    <location>
        <begin position="326"/>
        <end position="328"/>
    </location>
    <ligand>
        <name>NAD(+)</name>
        <dbReference type="ChEBI" id="CHEBI:57540"/>
    </ligand>
</feature>
<feature type="binding site" description="in other chain" evidence="1">
    <location>
        <position position="328"/>
    </location>
    <ligand>
        <name>K(+)</name>
        <dbReference type="ChEBI" id="CHEBI:29103"/>
        <note>ligand shared between two tetrameric partners</note>
    </ligand>
</feature>
<feature type="binding site" description="in other chain" evidence="1">
    <location>
        <position position="330"/>
    </location>
    <ligand>
        <name>K(+)</name>
        <dbReference type="ChEBI" id="CHEBI:29103"/>
        <note>ligand shared between two tetrameric partners</note>
    </ligand>
</feature>
<feature type="binding site" evidence="1">
    <location>
        <position position="331"/>
    </location>
    <ligand>
        <name>IMP</name>
        <dbReference type="ChEBI" id="CHEBI:58053"/>
    </ligand>
</feature>
<feature type="binding site" description="in other chain" evidence="1">
    <location>
        <position position="333"/>
    </location>
    <ligand>
        <name>K(+)</name>
        <dbReference type="ChEBI" id="CHEBI:29103"/>
        <note>ligand shared between two tetrameric partners</note>
    </ligand>
</feature>
<feature type="binding site" evidence="1">
    <location>
        <begin position="366"/>
        <end position="368"/>
    </location>
    <ligand>
        <name>IMP</name>
        <dbReference type="ChEBI" id="CHEBI:58053"/>
    </ligand>
</feature>
<feature type="binding site" evidence="1">
    <location>
        <begin position="389"/>
        <end position="390"/>
    </location>
    <ligand>
        <name>IMP</name>
        <dbReference type="ChEBI" id="CHEBI:58053"/>
    </ligand>
</feature>
<feature type="binding site" evidence="1">
    <location>
        <position position="451"/>
    </location>
    <ligand>
        <name>IMP</name>
        <dbReference type="ChEBI" id="CHEBI:58053"/>
    </ligand>
</feature>
<feature type="binding site" evidence="1">
    <location>
        <position position="506"/>
    </location>
    <ligand>
        <name>K(+)</name>
        <dbReference type="ChEBI" id="CHEBI:29103"/>
        <note>ligand shared between two tetrameric partners</note>
    </ligand>
</feature>
<protein>
    <recommendedName>
        <fullName evidence="1">Inosine-5'-monophosphate dehydrogenase</fullName>
        <shortName evidence="1">IMP dehydrogenase</shortName>
        <shortName evidence="1">IMPD</shortName>
        <shortName evidence="1">IMPDH</shortName>
        <ecNumber evidence="1">1.1.1.205</ecNumber>
    </recommendedName>
    <alternativeName>
        <fullName evidence="5">Mycophenolic acid biosynthesis cluster protein F</fullName>
    </alternativeName>
</protein>
<proteinExistence type="inferred from homology"/>
<sequence length="526" mass="55877">MVEILDYTKALEVLKEYPGDGLHVDTLLDSDSHGALTYNDFLILPGSITFPASDVSLETRVTRRFTIKAPLLSSPMDTVTEHSMAIHMALLGGLGVIHNNCPPDEQAEMVRKVKRYENGFIQDPIVLSPETTVGEAKELKTKWGFGGFPVTEKGTLHSKLLGIVTSRDIQFHKNHEDPVTAVMATDLVTAPAGTTLAEANEVLRSSKKGKLPIVDKDGSLISLLSRSDLMKNIHYPLASKLPSKQLLCAAAISTHDADKVRLQKLVDAGLDIVVVDSSQGHSTFQIAMIKYIKQNFPDIDVIGGNIVTREQAAALIAAGADGLRIGMGSGSACITQEVMAAGRPQAAAVRSVSAFAARFGVPTIADGGVQNLGHIVKGLALGASAVMMGSLLAGTTESPGEYFMSSEGQLVKAFRGMGSIAVMEDKSKSGAGNNAGASRYFSENDKVKVAQGVAGSVIDRGSITQYVPYLVAGVQHSLQDIGVQNLDALREGVNNGTVRFEMRSASAQTEGNVHGLHTHEKKLYSS</sequence>
<reference key="1">
    <citation type="journal article" date="2014" name="Nat. Commun.">
        <title>Multiple recent horizontal transfers of a large genomic region in cheese making fungi.</title>
        <authorList>
            <person name="Cheeseman K."/>
            <person name="Ropars J."/>
            <person name="Renault P."/>
            <person name="Dupont J."/>
            <person name="Gouzy J."/>
            <person name="Branca A."/>
            <person name="Abraham A.-L."/>
            <person name="Ceppi M."/>
            <person name="Conseiller E."/>
            <person name="Debuchy R."/>
            <person name="Malagnac F."/>
            <person name="Goarin A."/>
            <person name="Silar P."/>
            <person name="Lacoste S."/>
            <person name="Sallet E."/>
            <person name="Bensimon A."/>
            <person name="Giraud T."/>
            <person name="Brygoo Y."/>
        </authorList>
    </citation>
    <scope>NUCLEOTIDE SEQUENCE [LARGE SCALE GENOMIC DNA]</scope>
    <source>
        <strain>FM164</strain>
    </source>
</reference>
<reference key="2">
    <citation type="journal article" date="2016" name="PLoS ONE">
        <title>Identification and functional analysis of the mycophenolic acid gene cluster of Penicillium roqueforti.</title>
        <authorList>
            <person name="Del-Cid A."/>
            <person name="Gil-Duran C."/>
            <person name="Vaca I."/>
            <person name="Rojas-Aedo J.F."/>
            <person name="Garcia-Rico R.O."/>
            <person name="Levican G."/>
            <person name="Chavez R."/>
        </authorList>
    </citation>
    <scope>FUNCTION</scope>
    <scope>DISRUPTION PHENOTYPE</scope>
    <scope>PATHWAY</scope>
</reference>
<name>MPAF_PENRF</name>
<organism>
    <name type="scientific">Penicillium roqueforti (strain FM164)</name>
    <dbReference type="NCBI Taxonomy" id="1365484"/>
    <lineage>
        <taxon>Eukaryota</taxon>
        <taxon>Fungi</taxon>
        <taxon>Dikarya</taxon>
        <taxon>Ascomycota</taxon>
        <taxon>Pezizomycotina</taxon>
        <taxon>Eurotiomycetes</taxon>
        <taxon>Eurotiomycetidae</taxon>
        <taxon>Eurotiales</taxon>
        <taxon>Aspergillaceae</taxon>
        <taxon>Penicillium</taxon>
    </lineage>
</organism>
<dbReference type="EC" id="1.1.1.205" evidence="1"/>
<dbReference type="EMBL" id="HG792019">
    <property type="protein sequence ID" value="CDM36723.1"/>
    <property type="molecule type" value="Genomic_DNA"/>
</dbReference>
<dbReference type="SMR" id="W6QIT2"/>
<dbReference type="STRING" id="1365484.W6QIT2"/>
<dbReference type="OMA" id="NCPPDEQ"/>
<dbReference type="OrthoDB" id="416622at2759"/>
<dbReference type="UniPathway" id="UPA00213"/>
<dbReference type="Proteomes" id="UP000030686">
    <property type="component" value="Unassembled WGS sequence"/>
</dbReference>
<dbReference type="GO" id="GO:0005737">
    <property type="term" value="C:cytoplasm"/>
    <property type="evidence" value="ECO:0007669"/>
    <property type="project" value="UniProtKB-SubCell"/>
</dbReference>
<dbReference type="GO" id="GO:0003938">
    <property type="term" value="F:IMP dehydrogenase activity"/>
    <property type="evidence" value="ECO:0007669"/>
    <property type="project" value="UniProtKB-UniRule"/>
</dbReference>
<dbReference type="GO" id="GO:0046872">
    <property type="term" value="F:metal ion binding"/>
    <property type="evidence" value="ECO:0007669"/>
    <property type="project" value="UniProtKB-UniRule"/>
</dbReference>
<dbReference type="GO" id="GO:0000166">
    <property type="term" value="F:nucleotide binding"/>
    <property type="evidence" value="ECO:0007669"/>
    <property type="project" value="UniProtKB-UniRule"/>
</dbReference>
<dbReference type="GO" id="GO:0006177">
    <property type="term" value="P:GMP biosynthetic process"/>
    <property type="evidence" value="ECO:0007669"/>
    <property type="project" value="UniProtKB-UniRule"/>
</dbReference>
<dbReference type="GO" id="GO:0006183">
    <property type="term" value="P:GTP biosynthetic process"/>
    <property type="evidence" value="ECO:0007669"/>
    <property type="project" value="TreeGrafter"/>
</dbReference>
<dbReference type="GO" id="GO:0140729">
    <property type="term" value="P:self-resistance to endogenously produced metabolite"/>
    <property type="evidence" value="ECO:0000250"/>
    <property type="project" value="GO_Central"/>
</dbReference>
<dbReference type="GO" id="GO:0016114">
    <property type="term" value="P:terpenoid biosynthetic process"/>
    <property type="evidence" value="ECO:0007669"/>
    <property type="project" value="UniProtKB-UniPathway"/>
</dbReference>
<dbReference type="CDD" id="cd04601">
    <property type="entry name" value="CBS_pair_IMPDH"/>
    <property type="match status" value="1"/>
</dbReference>
<dbReference type="CDD" id="cd00381">
    <property type="entry name" value="IMPDH"/>
    <property type="match status" value="1"/>
</dbReference>
<dbReference type="FunFam" id="3.20.20.70:FF:000007">
    <property type="entry name" value="Chromosome 19 SCAF14664, whole genome shotgun sequence"/>
    <property type="match status" value="1"/>
</dbReference>
<dbReference type="Gene3D" id="3.20.20.70">
    <property type="entry name" value="Aldolase class I"/>
    <property type="match status" value="1"/>
</dbReference>
<dbReference type="HAMAP" id="MF_01964">
    <property type="entry name" value="IMPDH"/>
    <property type="match status" value="1"/>
</dbReference>
<dbReference type="InterPro" id="IPR013785">
    <property type="entry name" value="Aldolase_TIM"/>
</dbReference>
<dbReference type="InterPro" id="IPR000644">
    <property type="entry name" value="CBS_dom"/>
</dbReference>
<dbReference type="InterPro" id="IPR046342">
    <property type="entry name" value="CBS_dom_sf"/>
</dbReference>
<dbReference type="InterPro" id="IPR005990">
    <property type="entry name" value="IMP_DH"/>
</dbReference>
<dbReference type="InterPro" id="IPR015875">
    <property type="entry name" value="IMP_DH/GMP_Rdtase_CS"/>
</dbReference>
<dbReference type="InterPro" id="IPR001093">
    <property type="entry name" value="IMP_DH_GMPRt"/>
</dbReference>
<dbReference type="NCBIfam" id="TIGR01302">
    <property type="entry name" value="IMP_dehydrog"/>
    <property type="match status" value="1"/>
</dbReference>
<dbReference type="PANTHER" id="PTHR11911:SF111">
    <property type="entry name" value="INOSINE-5'-MONOPHOSPHATE DEHYDROGENASE"/>
    <property type="match status" value="1"/>
</dbReference>
<dbReference type="PANTHER" id="PTHR11911">
    <property type="entry name" value="INOSINE-5-MONOPHOSPHATE DEHYDROGENASE RELATED"/>
    <property type="match status" value="1"/>
</dbReference>
<dbReference type="Pfam" id="PF00571">
    <property type="entry name" value="CBS"/>
    <property type="match status" value="2"/>
</dbReference>
<dbReference type="Pfam" id="PF00478">
    <property type="entry name" value="IMPDH"/>
    <property type="match status" value="1"/>
</dbReference>
<dbReference type="PIRSF" id="PIRSF000130">
    <property type="entry name" value="IMPDH"/>
    <property type="match status" value="1"/>
</dbReference>
<dbReference type="SMART" id="SM00116">
    <property type="entry name" value="CBS"/>
    <property type="match status" value="2"/>
</dbReference>
<dbReference type="SMART" id="SM01240">
    <property type="entry name" value="IMPDH"/>
    <property type="match status" value="1"/>
</dbReference>
<dbReference type="SUPFAM" id="SSF54631">
    <property type="entry name" value="CBS-domain pair"/>
    <property type="match status" value="1"/>
</dbReference>
<dbReference type="SUPFAM" id="SSF51412">
    <property type="entry name" value="Inosine monophosphate dehydrogenase (IMPDH)"/>
    <property type="match status" value="1"/>
</dbReference>
<dbReference type="PROSITE" id="PS51371">
    <property type="entry name" value="CBS"/>
    <property type="match status" value="2"/>
</dbReference>
<dbReference type="PROSITE" id="PS00487">
    <property type="entry name" value="IMP_DH_GMP_RED"/>
    <property type="match status" value="1"/>
</dbReference>